<dbReference type="EMBL" id="ACFL01000035">
    <property type="protein sequence ID" value="EEU08351.1"/>
    <property type="molecule type" value="Genomic_DNA"/>
</dbReference>
<dbReference type="SMR" id="C7GLH8"/>
<dbReference type="Proteomes" id="UP000008073">
    <property type="component" value="Unassembled WGS sequence"/>
</dbReference>
<dbReference type="GO" id="GO:0005634">
    <property type="term" value="C:nucleus"/>
    <property type="evidence" value="ECO:0007669"/>
    <property type="project" value="UniProtKB-SubCell"/>
</dbReference>
<dbReference type="GO" id="GO:2000640">
    <property type="term" value="P:positive regulation of SREBP signaling pathway"/>
    <property type="evidence" value="ECO:0007669"/>
    <property type="project" value="TreeGrafter"/>
</dbReference>
<dbReference type="GO" id="GO:0006417">
    <property type="term" value="P:regulation of translation"/>
    <property type="evidence" value="ECO:0007669"/>
    <property type="project" value="UniProtKB-KW"/>
</dbReference>
<dbReference type="Gene3D" id="1.25.40.10">
    <property type="entry name" value="Tetratricopeptide repeat domain"/>
    <property type="match status" value="1"/>
</dbReference>
<dbReference type="InterPro" id="IPR024318">
    <property type="entry name" value="Nro1/ETT1"/>
</dbReference>
<dbReference type="InterPro" id="IPR011990">
    <property type="entry name" value="TPR-like_helical_dom_sf"/>
</dbReference>
<dbReference type="PANTHER" id="PTHR28290">
    <property type="entry name" value="ENHANCER OF TRANSLATION TERMINATION 1"/>
    <property type="match status" value="1"/>
</dbReference>
<dbReference type="PANTHER" id="PTHR28290:SF1">
    <property type="entry name" value="ENHANCER OF TRANSLATION TERMINATION 1"/>
    <property type="match status" value="1"/>
</dbReference>
<dbReference type="Pfam" id="PF12753">
    <property type="entry name" value="Nro1"/>
    <property type="match status" value="1"/>
</dbReference>
<comment type="function">
    <text evidence="1">Required for correct translation termination and probably involved in regulation of hypoxic gene expression in association TPA1. Inhibits replication of Brome mosaic virus (By similarity).</text>
</comment>
<comment type="subunit">
    <text evidence="1">Interacts with STM1.</text>
</comment>
<comment type="subcellular location">
    <subcellularLocation>
        <location evidence="1">Nucleus</location>
    </subcellularLocation>
</comment>
<comment type="similarity">
    <text evidence="4">Belongs to the ETT1 family.</text>
</comment>
<keyword id="KW-0539">Nucleus</keyword>
<keyword id="KW-0597">Phosphoprotein</keyword>
<keyword id="KW-0804">Transcription</keyword>
<keyword id="KW-0805">Transcription regulation</keyword>
<keyword id="KW-0810">Translation regulation</keyword>
<sequence>MAKRPLGLGKQSREKKRKVESVEKKSDEPSRESTPVRSQMSVELDDDADLDDELAQLKGLWSKYFHSDRDDEYVLNGIVHECDRLLRLSEEDKEIKKTLNDIFHGIYALALSELTIFKAGDEEATEEKRKKDVSSFFESAIERVELGLSHFPESQFLKLVLAKIIFQRIPLEYISNLHLKSKDKKLDLVGQLEHGKKHFSIYENDTEFTFEILQMVNDLLDIVENFGREQSIQEGIDSDNEEEEELIDIELEPEHPVYPLQQSLEANYEWLRNHFDKLLDNTNTDVKIYASIANTLGELYLKKAEEPSKVFLSLQYDDGGSEKVSDKEAKNAQETALKHTKKALEYLEKAKLEDDPDTWVQVAEAYIDLGNLLDNESAEQEEAYKTAEEILGKANKASHGKFQDVLDNFLQG</sequence>
<gene>
    <name type="primary">ETT1</name>
    <name type="ORF">C1Q_01058</name>
</gene>
<feature type="chain" id="PRO_0000406626" description="Enhancer of translation termination 1">
    <location>
        <begin position="1"/>
        <end position="412"/>
    </location>
</feature>
<feature type="region of interest" description="Disordered" evidence="3">
    <location>
        <begin position="1"/>
        <end position="45"/>
    </location>
</feature>
<feature type="compositionally biased region" description="Basic and acidic residues" evidence="3">
    <location>
        <begin position="17"/>
        <end position="31"/>
    </location>
</feature>
<feature type="compositionally biased region" description="Polar residues" evidence="3">
    <location>
        <begin position="32"/>
        <end position="41"/>
    </location>
</feature>
<feature type="modified residue" description="Phosphoserine" evidence="2">
    <location>
        <position position="30"/>
    </location>
</feature>
<accession>C7GLH8</accession>
<organism>
    <name type="scientific">Saccharomyces cerevisiae (strain JAY291)</name>
    <name type="common">Baker's yeast</name>
    <dbReference type="NCBI Taxonomy" id="574961"/>
    <lineage>
        <taxon>Eukaryota</taxon>
        <taxon>Fungi</taxon>
        <taxon>Dikarya</taxon>
        <taxon>Ascomycota</taxon>
        <taxon>Saccharomycotina</taxon>
        <taxon>Saccharomycetes</taxon>
        <taxon>Saccharomycetales</taxon>
        <taxon>Saccharomycetaceae</taxon>
        <taxon>Saccharomyces</taxon>
    </lineage>
</organism>
<proteinExistence type="inferred from homology"/>
<name>ETT1_YEAS2</name>
<protein>
    <recommendedName>
        <fullName>Enhancer of translation termination 1</fullName>
    </recommendedName>
</protein>
<evidence type="ECO:0000250" key="1"/>
<evidence type="ECO:0000250" key="2">
    <source>
        <dbReference type="UniProtKB" id="Q08421"/>
    </source>
</evidence>
<evidence type="ECO:0000256" key="3">
    <source>
        <dbReference type="SAM" id="MobiDB-lite"/>
    </source>
</evidence>
<evidence type="ECO:0000305" key="4"/>
<reference key="1">
    <citation type="journal article" date="2009" name="Genome Res.">
        <title>Genome structure of a Saccharomyces cerevisiae strain widely used in bioethanol production.</title>
        <authorList>
            <person name="Argueso J.L."/>
            <person name="Carazzolle M.F."/>
            <person name="Mieczkowski P.A."/>
            <person name="Duarte F.M."/>
            <person name="Netto O.V.C."/>
            <person name="Missawa S.K."/>
            <person name="Galzerani F."/>
            <person name="Costa G.G.L."/>
            <person name="Vidal R.O."/>
            <person name="Noronha M.F."/>
            <person name="Dominska M."/>
            <person name="Andrietta M.G.S."/>
            <person name="Andrietta S.R."/>
            <person name="Cunha A.F."/>
            <person name="Gomes L.H."/>
            <person name="Tavares F.C.A."/>
            <person name="Alcarde A.R."/>
            <person name="Dietrich F.S."/>
            <person name="McCusker J.H."/>
            <person name="Petes T.D."/>
            <person name="Pereira G.A.G."/>
        </authorList>
    </citation>
    <scope>NUCLEOTIDE SEQUENCE [LARGE SCALE GENOMIC DNA]</scope>
    <source>
        <strain>JAY291</strain>
    </source>
</reference>